<evidence type="ECO:0000250" key="1"/>
<evidence type="ECO:0000250" key="2">
    <source>
        <dbReference type="UniProtKB" id="P10451"/>
    </source>
</evidence>
<evidence type="ECO:0000250" key="3">
    <source>
        <dbReference type="UniProtKB" id="P10923"/>
    </source>
</evidence>
<evidence type="ECO:0000250" key="4">
    <source>
        <dbReference type="UniProtKB" id="P31096"/>
    </source>
</evidence>
<evidence type="ECO:0000255" key="5"/>
<evidence type="ECO:0000256" key="6">
    <source>
        <dbReference type="SAM" id="MobiDB-lite"/>
    </source>
</evidence>
<evidence type="ECO:0000305" key="7"/>
<proteinExistence type="evidence at transcript level"/>
<feature type="signal peptide" evidence="1">
    <location>
        <begin position="1"/>
        <end position="16"/>
    </location>
</feature>
<feature type="chain" id="PRO_0000020326" description="Osteopontin">
    <location>
        <begin position="17"/>
        <end position="278"/>
    </location>
</feature>
<feature type="region of interest" description="Disordered" evidence="6">
    <location>
        <begin position="18"/>
        <end position="278"/>
    </location>
</feature>
<feature type="short sequence motif" description="Cell attachment site">
    <location>
        <begin position="152"/>
        <end position="154"/>
    </location>
</feature>
<feature type="compositionally biased region" description="Polar residues" evidence="6">
    <location>
        <begin position="49"/>
        <end position="63"/>
    </location>
</feature>
<feature type="compositionally biased region" description="Polar residues" evidence="6">
    <location>
        <begin position="71"/>
        <end position="82"/>
    </location>
</feature>
<feature type="compositionally biased region" description="Acidic residues" evidence="6">
    <location>
        <begin position="83"/>
        <end position="110"/>
    </location>
</feature>
<feature type="compositionally biased region" description="Basic and acidic residues" evidence="6">
    <location>
        <begin position="111"/>
        <end position="122"/>
    </location>
</feature>
<feature type="compositionally biased region" description="Basic and acidic residues" evidence="6">
    <location>
        <begin position="182"/>
        <end position="196"/>
    </location>
</feature>
<feature type="compositionally biased region" description="Basic and acidic residues" evidence="6">
    <location>
        <begin position="203"/>
        <end position="235"/>
    </location>
</feature>
<feature type="compositionally biased region" description="Basic and acidic residues" evidence="6">
    <location>
        <begin position="244"/>
        <end position="271"/>
    </location>
</feature>
<feature type="modified residue" description="Phosphoserine" evidence="4">
    <location>
        <position position="24"/>
    </location>
</feature>
<feature type="modified residue" description="Phosphoserine" evidence="2">
    <location>
        <position position="26"/>
    </location>
</feature>
<feature type="modified residue" description="Phosphoserine" evidence="2">
    <location>
        <position position="27"/>
    </location>
</feature>
<feature type="modified residue" description="Phosphoserine" evidence="4">
    <location>
        <position position="60"/>
    </location>
</feature>
<feature type="modified residue" description="Phosphoserine" evidence="2">
    <location>
        <position position="62"/>
    </location>
</feature>
<feature type="modified residue" description="Phosphoserine" evidence="2">
    <location>
        <position position="63"/>
    </location>
</feature>
<feature type="modified residue" description="Phosphothreonine" evidence="2">
    <location>
        <position position="66"/>
    </location>
</feature>
<feature type="modified residue" description="Phosphoserine" evidence="4">
    <location>
        <position position="76"/>
    </location>
</feature>
<feature type="modified residue" description="Phosphoserine" evidence="4">
    <location>
        <position position="78"/>
    </location>
</feature>
<feature type="modified residue" description="Phosphoserine" evidence="4">
    <location>
        <position position="81"/>
    </location>
</feature>
<feature type="modified residue" description="Phosphoserine" evidence="4">
    <location>
        <position position="103"/>
    </location>
</feature>
<feature type="modified residue" description="Phosphoserine" evidence="2">
    <location>
        <position position="112"/>
    </location>
</feature>
<feature type="modified residue" description="Phosphoserine" evidence="4">
    <location>
        <position position="115"/>
    </location>
</feature>
<feature type="modified residue" description="Phosphoserine" evidence="2">
    <location>
        <position position="118"/>
    </location>
</feature>
<feature type="modified residue" description="Phosphoserine" evidence="4">
    <location>
        <position position="121"/>
    </location>
</feature>
<feature type="modified residue" description="Phosphoserine" evidence="4">
    <location>
        <position position="124"/>
    </location>
</feature>
<feature type="modified residue" description="Phosphothreonine" evidence="4">
    <location>
        <position position="178"/>
    </location>
</feature>
<feature type="modified residue" description="Phosphothreonine" evidence="2">
    <location>
        <position position="183"/>
    </location>
</feature>
<feature type="modified residue" description="Phosphoserine" evidence="2">
    <location>
        <position position="184"/>
    </location>
</feature>
<feature type="modified residue" description="Phosphoserine" evidence="2">
    <location>
        <position position="188"/>
    </location>
</feature>
<feature type="modified residue" description="Phosphoserine" evidence="2">
    <location>
        <position position="199"/>
    </location>
</feature>
<feature type="modified residue" description="Phosphoserine" evidence="2">
    <location>
        <position position="205"/>
    </location>
</feature>
<feature type="modified residue" description="Phosphothreonine" evidence="2">
    <location>
        <position position="208"/>
    </location>
</feature>
<feature type="modified residue" description="Phosphoserine" evidence="2">
    <location>
        <position position="210"/>
    </location>
</feature>
<feature type="modified residue" description="Phosphoserine" evidence="2">
    <location>
        <position position="228"/>
    </location>
</feature>
<feature type="modified residue" description="Phosphoserine" evidence="2">
    <location>
        <position position="233"/>
    </location>
</feature>
<feature type="modified residue" description="Phosphoserine" evidence="2">
    <location>
        <position position="237"/>
    </location>
</feature>
<feature type="modified residue" description="Phosphoserine" evidence="2">
    <location>
        <position position="240"/>
    </location>
</feature>
<feature type="modified residue" description="Phosphoserine" evidence="2">
    <location>
        <position position="245"/>
    </location>
</feature>
<feature type="modified residue" description="Phosphoserine" evidence="2">
    <location>
        <position position="256"/>
    </location>
</feature>
<feature type="modified residue" description="Phosphoserine" evidence="2">
    <location>
        <position position="267"/>
    </location>
</feature>
<feature type="modified residue" description="Phosphoserine" evidence="2">
    <location>
        <position position="272"/>
    </location>
</feature>
<feature type="modified residue" description="Phosphoserine" evidence="2">
    <location>
        <position position="274"/>
    </location>
</feature>
<feature type="modified residue" description="Phosphoserine" evidence="2">
    <location>
        <position position="275"/>
    </location>
</feature>
<feature type="glycosylation site" description="N-linked (GlcNAc...) asparagine" evidence="5">
    <location>
        <position position="116"/>
    </location>
</feature>
<feature type="glycosylation site" description="O-linked (GalNAc...) threonine" evidence="1">
    <location>
        <position position="131"/>
    </location>
</feature>
<feature type="glycosylation site" description="O-linked (GalNAc...) threonine" evidence="1">
    <location>
        <position position="140"/>
    </location>
</feature>
<feature type="glycosylation site" description="O-linked (GalNAc...) threonine" evidence="1">
    <location>
        <position position="145"/>
    </location>
</feature>
<feature type="glycosylation site" description="O-linked (Xyl...) (chondroitin sulfate) serine" evidence="2">
    <location>
        <position position="205"/>
    </location>
</feature>
<feature type="glycosylation site" description="O-linked (Xyl...) (chondroitin sulfate) serine" evidence="2">
    <location>
        <position position="272"/>
    </location>
</feature>
<reference key="1">
    <citation type="journal article" date="1999" name="Biol. Reprod.">
        <title>Ovine osteopontin: I. Cloning and expression of messenger ribonucleic acid in the uterus during the periimplantation period.</title>
        <authorList>
            <person name="Johnson G.A."/>
            <person name="Spencer T.E."/>
            <person name="Burghardt R.C."/>
            <person name="Bazer F.W."/>
        </authorList>
    </citation>
    <scope>NUCLEOTIDE SEQUENCE [MRNA]</scope>
    <source>
        <tissue>Endometrium</tissue>
    </source>
</reference>
<name>OSTP_SHEEP</name>
<organism>
    <name type="scientific">Ovis aries</name>
    <name type="common">Sheep</name>
    <dbReference type="NCBI Taxonomy" id="9940"/>
    <lineage>
        <taxon>Eukaryota</taxon>
        <taxon>Metazoa</taxon>
        <taxon>Chordata</taxon>
        <taxon>Craniata</taxon>
        <taxon>Vertebrata</taxon>
        <taxon>Euteleostomi</taxon>
        <taxon>Mammalia</taxon>
        <taxon>Eutheria</taxon>
        <taxon>Laurasiatheria</taxon>
        <taxon>Artiodactyla</taxon>
        <taxon>Ruminantia</taxon>
        <taxon>Pecora</taxon>
        <taxon>Bovidae</taxon>
        <taxon>Caprinae</taxon>
        <taxon>Ovis</taxon>
    </lineage>
</organism>
<dbReference type="EMBL" id="AF152416">
    <property type="protein sequence ID" value="AAD38388.1"/>
    <property type="molecule type" value="mRNA"/>
</dbReference>
<dbReference type="RefSeq" id="NP_001009224.1">
    <property type="nucleotide sequence ID" value="NM_001009224.1"/>
</dbReference>
<dbReference type="STRING" id="9940.ENSOARP00000002753"/>
<dbReference type="GlyCosmos" id="Q9XSY9">
    <property type="glycosylation" value="4 sites, No reported glycans"/>
</dbReference>
<dbReference type="PaxDb" id="9940-ENSOARP00000002753"/>
<dbReference type="GeneID" id="443058"/>
<dbReference type="KEGG" id="oas:443058"/>
<dbReference type="CTD" id="6696"/>
<dbReference type="eggNOG" id="ENOG502S5R4">
    <property type="taxonomic scope" value="Eukaryota"/>
</dbReference>
<dbReference type="OrthoDB" id="9047304at2759"/>
<dbReference type="Proteomes" id="UP000002356">
    <property type="component" value="Unplaced"/>
</dbReference>
<dbReference type="GO" id="GO:0005615">
    <property type="term" value="C:extracellular space"/>
    <property type="evidence" value="ECO:0007669"/>
    <property type="project" value="UniProtKB-KW"/>
</dbReference>
<dbReference type="GO" id="GO:0005125">
    <property type="term" value="F:cytokine activity"/>
    <property type="evidence" value="ECO:0007669"/>
    <property type="project" value="UniProtKB-KW"/>
</dbReference>
<dbReference type="GO" id="GO:0050840">
    <property type="term" value="F:extracellular matrix binding"/>
    <property type="evidence" value="ECO:0007669"/>
    <property type="project" value="TreeGrafter"/>
</dbReference>
<dbReference type="GO" id="GO:0005178">
    <property type="term" value="F:integrin binding"/>
    <property type="evidence" value="ECO:0000250"/>
    <property type="project" value="UniProtKB"/>
</dbReference>
<dbReference type="GO" id="GO:0031214">
    <property type="term" value="P:biomineral tissue development"/>
    <property type="evidence" value="ECO:0007669"/>
    <property type="project" value="UniProtKB-KW"/>
</dbReference>
<dbReference type="GO" id="GO:0007155">
    <property type="term" value="P:cell adhesion"/>
    <property type="evidence" value="ECO:0007669"/>
    <property type="project" value="UniProtKB-KW"/>
</dbReference>
<dbReference type="GO" id="GO:0001649">
    <property type="term" value="P:osteoblast differentiation"/>
    <property type="evidence" value="ECO:0007669"/>
    <property type="project" value="TreeGrafter"/>
</dbReference>
<dbReference type="GO" id="GO:0045780">
    <property type="term" value="P:positive regulation of bone resorption"/>
    <property type="evidence" value="ECO:0007669"/>
    <property type="project" value="TreeGrafter"/>
</dbReference>
<dbReference type="InterPro" id="IPR002038">
    <property type="entry name" value="Osteopontin"/>
</dbReference>
<dbReference type="InterPro" id="IPR019841">
    <property type="entry name" value="Osteopontin_CS"/>
</dbReference>
<dbReference type="PANTHER" id="PTHR10607">
    <property type="entry name" value="OSTEOPONTIN"/>
    <property type="match status" value="1"/>
</dbReference>
<dbReference type="PANTHER" id="PTHR10607:SF1">
    <property type="entry name" value="OSTEOPONTIN"/>
    <property type="match status" value="1"/>
</dbReference>
<dbReference type="Pfam" id="PF00865">
    <property type="entry name" value="Osteopontin"/>
    <property type="match status" value="2"/>
</dbReference>
<dbReference type="PRINTS" id="PR00216">
    <property type="entry name" value="OSTEOPONTIN"/>
</dbReference>
<dbReference type="SMART" id="SM00017">
    <property type="entry name" value="OSTEO"/>
    <property type="match status" value="1"/>
</dbReference>
<dbReference type="PROSITE" id="PS00884">
    <property type="entry name" value="OSTEOPONTIN"/>
    <property type="match status" value="1"/>
</dbReference>
<sequence>MRIAVICFCLLGIASALPVKPTSSGSSEEKQLNNKYPDAVATWLKPDPSQKQTFLEPQNSVSSEETDDNKQNTLPSKSNESPEQTDDLDDDDENSQEVNSDDSDDAETPDDSDHSNESHHSDESDEADFPTDIPTIAVFTPPFPTESTNDGRGDSVAYGLKSKSKKFRRSNVESPDATEEDFTSHIESEEMHDAPKKTSQLTDHSEETNSDELPKELTPKAKEESKHSNRIESQENSKLSQEFHSLEDKLDLDHKSEEDKRLKIRISHELDSVSSEVN</sequence>
<comment type="function">
    <text evidence="4">Major non-collagenous bone protein that binds tightly to hydroxyapatite. Appears to form an integral part of the mineralized matrix. Probably important to cell-matrix interaction.</text>
</comment>
<comment type="function">
    <text evidence="3">Acts as a cytokine involved in enhancing production of interferon-gamma and interleukin-12 and reducing production of interleukin-10 and is essential in the pathway that leads to type I immunity.</text>
</comment>
<comment type="subunit">
    <text evidence="3">Interacts (via N-terminus) with integrin ITGA9:ITGB1.</text>
</comment>
<comment type="subcellular location">
    <subcellularLocation>
        <location evidence="2">Secreted</location>
    </subcellularLocation>
</comment>
<comment type="PTM">
    <text evidence="2 3">Extensively phosphorylated by FAM20C in the extracellular medium at multiple sites within the S-x-E/pS motif (By similarity). The phosphorylated form inhibits hydroxyapatite crystallization. Dephosphorylation via a mechanism involving ALPL/TNAP promotes hydroxyapatite crystallization (By similarity).</text>
</comment>
<comment type="PTM">
    <text evidence="2">O-glycosylated.</text>
</comment>
<comment type="PTM">
    <text evidence="4">Forms covalent cross-links mediated by transglutaminase TGM2, between a glutamine and the epsilon-amino group of a lysine residue, forming homopolymers and heteropolymers, increasing its collagen binding properties.</text>
</comment>
<comment type="similarity">
    <text evidence="7">Belongs to the osteopontin family.</text>
</comment>
<protein>
    <recommendedName>
        <fullName>Osteopontin</fullName>
    </recommendedName>
    <alternativeName>
        <fullName>Bone sialoprotein 1</fullName>
    </alternativeName>
    <alternativeName>
        <fullName>Secreted phosphoprotein 1</fullName>
        <shortName>SPP-1</shortName>
    </alternativeName>
</protein>
<gene>
    <name type="primary">SPP1</name>
    <name type="synonym">OPN</name>
</gene>
<accession>Q9XSY9</accession>
<keyword id="KW-0091">Biomineralization</keyword>
<keyword id="KW-0130">Cell adhesion</keyword>
<keyword id="KW-0202">Cytokine</keyword>
<keyword id="KW-0325">Glycoprotein</keyword>
<keyword id="KW-0597">Phosphoprotein</keyword>
<keyword id="KW-0654">Proteoglycan</keyword>
<keyword id="KW-1185">Reference proteome</keyword>
<keyword id="KW-0964">Secreted</keyword>
<keyword id="KW-0730">Sialic acid</keyword>
<keyword id="KW-0732">Signal</keyword>